<gene>
    <name evidence="1" type="primary">PFP-ALPHA1</name>
    <name type="ordered locus">At1g20950</name>
    <name type="ORF">F9H16.6</name>
</gene>
<dbReference type="EMBL" id="AC007369">
    <property type="protein sequence ID" value="AAD30596.1"/>
    <property type="molecule type" value="Genomic_DNA"/>
</dbReference>
<dbReference type="EMBL" id="CP002684">
    <property type="protein sequence ID" value="AEE30045.1"/>
    <property type="molecule type" value="Genomic_DNA"/>
</dbReference>
<dbReference type="EMBL" id="AY059855">
    <property type="protein sequence ID" value="AAL24337.1"/>
    <property type="molecule type" value="mRNA"/>
</dbReference>
<dbReference type="EMBL" id="BT008374">
    <property type="protein sequence ID" value="AAP37733.1"/>
    <property type="molecule type" value="mRNA"/>
</dbReference>
<dbReference type="PIR" id="D86342">
    <property type="entry name" value="D86342"/>
</dbReference>
<dbReference type="RefSeq" id="NP_173519.1">
    <property type="nucleotide sequence ID" value="NM_101948.3"/>
</dbReference>
<dbReference type="SMR" id="Q9SYP2"/>
<dbReference type="BioGRID" id="23928">
    <property type="interactions" value="14"/>
</dbReference>
<dbReference type="FunCoup" id="Q9SYP2">
    <property type="interactions" value="799"/>
</dbReference>
<dbReference type="IntAct" id="Q9SYP2">
    <property type="interactions" value="6"/>
</dbReference>
<dbReference type="STRING" id="3702.Q9SYP2"/>
<dbReference type="iPTMnet" id="Q9SYP2"/>
<dbReference type="PaxDb" id="3702-AT1G20950.1"/>
<dbReference type="ProteomicsDB" id="236430"/>
<dbReference type="EnsemblPlants" id="AT1G20950.1">
    <property type="protein sequence ID" value="AT1G20950.1"/>
    <property type="gene ID" value="AT1G20950"/>
</dbReference>
<dbReference type="GeneID" id="838689"/>
<dbReference type="Gramene" id="AT1G20950.1">
    <property type="protein sequence ID" value="AT1G20950.1"/>
    <property type="gene ID" value="AT1G20950"/>
</dbReference>
<dbReference type="KEGG" id="ath:AT1G20950"/>
<dbReference type="Araport" id="AT1G20950"/>
<dbReference type="TAIR" id="AT1G20950"/>
<dbReference type="eggNOG" id="KOG2440">
    <property type="taxonomic scope" value="Eukaryota"/>
</dbReference>
<dbReference type="HOGENOM" id="CLU_022288_2_0_1"/>
<dbReference type="InParanoid" id="Q9SYP2"/>
<dbReference type="OMA" id="CASYTHI"/>
<dbReference type="PhylomeDB" id="Q9SYP2"/>
<dbReference type="BioCyc" id="ARA:AT1G20950-MONOMER"/>
<dbReference type="UniPathway" id="UPA00109">
    <property type="reaction ID" value="UER00182"/>
</dbReference>
<dbReference type="PRO" id="PR:Q9SYP2"/>
<dbReference type="Proteomes" id="UP000006548">
    <property type="component" value="Chromosome 1"/>
</dbReference>
<dbReference type="ExpressionAtlas" id="Q9SYP2">
    <property type="expression patterns" value="baseline and differential"/>
</dbReference>
<dbReference type="GO" id="GO:0005737">
    <property type="term" value="C:cytoplasm"/>
    <property type="evidence" value="ECO:0007669"/>
    <property type="project" value="UniProtKB-SubCell"/>
</dbReference>
<dbReference type="GO" id="GO:0005634">
    <property type="term" value="C:nucleus"/>
    <property type="evidence" value="ECO:0007005"/>
    <property type="project" value="TAIR"/>
</dbReference>
<dbReference type="GO" id="GO:0003872">
    <property type="term" value="F:6-phosphofructokinase activity"/>
    <property type="evidence" value="ECO:0007669"/>
    <property type="project" value="UniProtKB-UniRule"/>
</dbReference>
<dbReference type="GO" id="GO:0005524">
    <property type="term" value="F:ATP binding"/>
    <property type="evidence" value="ECO:0007669"/>
    <property type="project" value="InterPro"/>
</dbReference>
<dbReference type="GO" id="GO:0047334">
    <property type="term" value="F:diphosphate-fructose-6-phosphate 1-phosphotransferase activity"/>
    <property type="evidence" value="ECO:0000315"/>
    <property type="project" value="TAIR"/>
</dbReference>
<dbReference type="GO" id="GO:0046872">
    <property type="term" value="F:metal ion binding"/>
    <property type="evidence" value="ECO:0007669"/>
    <property type="project" value="UniProtKB-KW"/>
</dbReference>
<dbReference type="GO" id="GO:0015979">
    <property type="term" value="P:photosynthesis"/>
    <property type="evidence" value="ECO:0000315"/>
    <property type="project" value="TAIR"/>
</dbReference>
<dbReference type="GO" id="GO:0009750">
    <property type="term" value="P:response to fructose"/>
    <property type="evidence" value="ECO:0000270"/>
    <property type="project" value="TAIR"/>
</dbReference>
<dbReference type="GO" id="GO:0009749">
    <property type="term" value="P:response to glucose"/>
    <property type="evidence" value="ECO:0000270"/>
    <property type="project" value="TAIR"/>
</dbReference>
<dbReference type="GO" id="GO:0009744">
    <property type="term" value="P:response to sucrose"/>
    <property type="evidence" value="ECO:0000270"/>
    <property type="project" value="TAIR"/>
</dbReference>
<dbReference type="FunFam" id="1.10.10.480:FF:000001">
    <property type="entry name" value="Pyrophosphate--fructose 6-phosphate 1-phosphotransferase subunit alpha"/>
    <property type="match status" value="1"/>
</dbReference>
<dbReference type="Gene3D" id="3.40.50.450">
    <property type="match status" value="1"/>
</dbReference>
<dbReference type="Gene3D" id="3.40.50.460">
    <property type="entry name" value="Phosphofructokinase domain"/>
    <property type="match status" value="1"/>
</dbReference>
<dbReference type="Gene3D" id="1.10.10.480">
    <property type="entry name" value="Phosphofructokinase, domain 3"/>
    <property type="match status" value="1"/>
</dbReference>
<dbReference type="HAMAP" id="MF_01980">
    <property type="entry name" value="Phosphofructokinase_II_Long"/>
    <property type="match status" value="1"/>
</dbReference>
<dbReference type="InterPro" id="IPR011183">
    <property type="entry name" value="PfpB_PPi_PFK"/>
</dbReference>
<dbReference type="InterPro" id="IPR000023">
    <property type="entry name" value="Phosphofructokinase_dom"/>
</dbReference>
<dbReference type="InterPro" id="IPR035966">
    <property type="entry name" value="PKF_sf"/>
</dbReference>
<dbReference type="NCBIfam" id="TIGR02477">
    <property type="entry name" value="PFKA_PPi"/>
    <property type="match status" value="1"/>
</dbReference>
<dbReference type="NCBIfam" id="NF005482">
    <property type="entry name" value="PRK07085.1"/>
    <property type="match status" value="1"/>
</dbReference>
<dbReference type="PANTHER" id="PTHR43650">
    <property type="entry name" value="PYROPHOSPHATE--FRUCTOSE 6-PHOSPHATE 1-PHOSPHOTRANSFERASE"/>
    <property type="match status" value="1"/>
</dbReference>
<dbReference type="PANTHER" id="PTHR43650:SF17">
    <property type="entry name" value="PYROPHOSPHATE--FRUCTOSE 6-PHOSPHATE 1-PHOSPHOTRANSFERASE SUBUNIT ALPHA 1"/>
    <property type="match status" value="1"/>
</dbReference>
<dbReference type="Pfam" id="PF00365">
    <property type="entry name" value="PFK"/>
    <property type="match status" value="1"/>
</dbReference>
<dbReference type="PIRSF" id="PIRSF005677">
    <property type="entry name" value="PPi_PFK_PfpB"/>
    <property type="match status" value="1"/>
</dbReference>
<dbReference type="SUPFAM" id="SSF53784">
    <property type="entry name" value="Phosphofructokinase"/>
    <property type="match status" value="1"/>
</dbReference>
<organism>
    <name type="scientific">Arabidopsis thaliana</name>
    <name type="common">Mouse-ear cress</name>
    <dbReference type="NCBI Taxonomy" id="3702"/>
    <lineage>
        <taxon>Eukaryota</taxon>
        <taxon>Viridiplantae</taxon>
        <taxon>Streptophyta</taxon>
        <taxon>Embryophyta</taxon>
        <taxon>Tracheophyta</taxon>
        <taxon>Spermatophyta</taxon>
        <taxon>Magnoliopsida</taxon>
        <taxon>eudicotyledons</taxon>
        <taxon>Gunneridae</taxon>
        <taxon>Pentapetalae</taxon>
        <taxon>rosids</taxon>
        <taxon>malvids</taxon>
        <taxon>Brassicales</taxon>
        <taxon>Brassicaceae</taxon>
        <taxon>Camelineae</taxon>
        <taxon>Arabidopsis</taxon>
    </lineage>
</organism>
<reference key="1">
    <citation type="journal article" date="2000" name="Nature">
        <title>Sequence and analysis of chromosome 1 of the plant Arabidopsis thaliana.</title>
        <authorList>
            <person name="Theologis A."/>
            <person name="Ecker J.R."/>
            <person name="Palm C.J."/>
            <person name="Federspiel N.A."/>
            <person name="Kaul S."/>
            <person name="White O."/>
            <person name="Alonso J."/>
            <person name="Altafi H."/>
            <person name="Araujo R."/>
            <person name="Bowman C.L."/>
            <person name="Brooks S.Y."/>
            <person name="Buehler E."/>
            <person name="Chan A."/>
            <person name="Chao Q."/>
            <person name="Chen H."/>
            <person name="Cheuk R.F."/>
            <person name="Chin C.W."/>
            <person name="Chung M.K."/>
            <person name="Conn L."/>
            <person name="Conway A.B."/>
            <person name="Conway A.R."/>
            <person name="Creasy T.H."/>
            <person name="Dewar K."/>
            <person name="Dunn P."/>
            <person name="Etgu P."/>
            <person name="Feldblyum T.V."/>
            <person name="Feng J.-D."/>
            <person name="Fong B."/>
            <person name="Fujii C.Y."/>
            <person name="Gill J.E."/>
            <person name="Goldsmith A.D."/>
            <person name="Haas B."/>
            <person name="Hansen N.F."/>
            <person name="Hughes B."/>
            <person name="Huizar L."/>
            <person name="Hunter J.L."/>
            <person name="Jenkins J."/>
            <person name="Johnson-Hopson C."/>
            <person name="Khan S."/>
            <person name="Khaykin E."/>
            <person name="Kim C.J."/>
            <person name="Koo H.L."/>
            <person name="Kremenetskaia I."/>
            <person name="Kurtz D.B."/>
            <person name="Kwan A."/>
            <person name="Lam B."/>
            <person name="Langin-Hooper S."/>
            <person name="Lee A."/>
            <person name="Lee J.M."/>
            <person name="Lenz C.A."/>
            <person name="Li J.H."/>
            <person name="Li Y.-P."/>
            <person name="Lin X."/>
            <person name="Liu S.X."/>
            <person name="Liu Z.A."/>
            <person name="Luros J.S."/>
            <person name="Maiti R."/>
            <person name="Marziali A."/>
            <person name="Militscher J."/>
            <person name="Miranda M."/>
            <person name="Nguyen M."/>
            <person name="Nierman W.C."/>
            <person name="Osborne B.I."/>
            <person name="Pai G."/>
            <person name="Peterson J."/>
            <person name="Pham P.K."/>
            <person name="Rizzo M."/>
            <person name="Rooney T."/>
            <person name="Rowley D."/>
            <person name="Sakano H."/>
            <person name="Salzberg S.L."/>
            <person name="Schwartz J.R."/>
            <person name="Shinn P."/>
            <person name="Southwick A.M."/>
            <person name="Sun H."/>
            <person name="Tallon L.J."/>
            <person name="Tambunga G."/>
            <person name="Toriumi M.J."/>
            <person name="Town C.D."/>
            <person name="Utterback T."/>
            <person name="Van Aken S."/>
            <person name="Vaysberg M."/>
            <person name="Vysotskaia V.S."/>
            <person name="Walker M."/>
            <person name="Wu D."/>
            <person name="Yu G."/>
            <person name="Fraser C.M."/>
            <person name="Venter J.C."/>
            <person name="Davis R.W."/>
        </authorList>
    </citation>
    <scope>NUCLEOTIDE SEQUENCE [LARGE SCALE GENOMIC DNA]</scope>
    <source>
        <strain>cv. Columbia</strain>
    </source>
</reference>
<reference key="2">
    <citation type="journal article" date="2017" name="Plant J.">
        <title>Araport11: a complete reannotation of the Arabidopsis thaliana reference genome.</title>
        <authorList>
            <person name="Cheng C.Y."/>
            <person name="Krishnakumar V."/>
            <person name="Chan A.P."/>
            <person name="Thibaud-Nissen F."/>
            <person name="Schobel S."/>
            <person name="Town C.D."/>
        </authorList>
    </citation>
    <scope>GENOME REANNOTATION</scope>
    <source>
        <strain>cv. Columbia</strain>
    </source>
</reference>
<reference key="3">
    <citation type="journal article" date="2003" name="Science">
        <title>Empirical analysis of transcriptional activity in the Arabidopsis genome.</title>
        <authorList>
            <person name="Yamada K."/>
            <person name="Lim J."/>
            <person name="Dale J.M."/>
            <person name="Chen H."/>
            <person name="Shinn P."/>
            <person name="Palm C.J."/>
            <person name="Southwick A.M."/>
            <person name="Wu H.C."/>
            <person name="Kim C.J."/>
            <person name="Nguyen M."/>
            <person name="Pham P.K."/>
            <person name="Cheuk R.F."/>
            <person name="Karlin-Newmann G."/>
            <person name="Liu S.X."/>
            <person name="Lam B."/>
            <person name="Sakano H."/>
            <person name="Wu T."/>
            <person name="Yu G."/>
            <person name="Miranda M."/>
            <person name="Quach H.L."/>
            <person name="Tripp M."/>
            <person name="Chang C.H."/>
            <person name="Lee J.M."/>
            <person name="Toriumi M.J."/>
            <person name="Chan M.M."/>
            <person name="Tang C.C."/>
            <person name="Onodera C.S."/>
            <person name="Deng J.M."/>
            <person name="Akiyama K."/>
            <person name="Ansari Y."/>
            <person name="Arakawa T."/>
            <person name="Banh J."/>
            <person name="Banno F."/>
            <person name="Bowser L."/>
            <person name="Brooks S.Y."/>
            <person name="Carninci P."/>
            <person name="Chao Q."/>
            <person name="Choy N."/>
            <person name="Enju A."/>
            <person name="Goldsmith A.D."/>
            <person name="Gurjal M."/>
            <person name="Hansen N.F."/>
            <person name="Hayashizaki Y."/>
            <person name="Johnson-Hopson C."/>
            <person name="Hsuan V.W."/>
            <person name="Iida K."/>
            <person name="Karnes M."/>
            <person name="Khan S."/>
            <person name="Koesema E."/>
            <person name="Ishida J."/>
            <person name="Jiang P.X."/>
            <person name="Jones T."/>
            <person name="Kawai J."/>
            <person name="Kamiya A."/>
            <person name="Meyers C."/>
            <person name="Nakajima M."/>
            <person name="Narusaka M."/>
            <person name="Seki M."/>
            <person name="Sakurai T."/>
            <person name="Satou M."/>
            <person name="Tamse R."/>
            <person name="Vaysberg M."/>
            <person name="Wallender E.K."/>
            <person name="Wong C."/>
            <person name="Yamamura Y."/>
            <person name="Yuan S."/>
            <person name="Shinozaki K."/>
            <person name="Davis R.W."/>
            <person name="Theologis A."/>
            <person name="Ecker J.R."/>
        </authorList>
    </citation>
    <scope>NUCLEOTIDE SEQUENCE [LARGE SCALE MRNA]</scope>
    <source>
        <strain>cv. Columbia</strain>
    </source>
</reference>
<reference key="4">
    <citation type="journal article" date="2004" name="Trends Plant Sci.">
        <title>Fructose-2,6-bisphosphate: a traffic signal in plant metabolism.</title>
        <authorList>
            <person name="Nielsen T.H."/>
            <person name="Rung J.H."/>
            <person name="Villadsen D."/>
        </authorList>
    </citation>
    <scope>REVIEW</scope>
</reference>
<reference key="5">
    <citation type="journal article" date="2006" name="J. Plant Res.">
        <title>Identification of sugar-modulated genes and evidence for in vivo sugar sensing in Arabidopsis.</title>
        <authorList>
            <person name="Gonzali S."/>
            <person name="Loreti E."/>
            <person name="Solfanelli C."/>
            <person name="Novi G."/>
            <person name="Alpi A."/>
            <person name="Perata P."/>
        </authorList>
    </citation>
    <scope>INDUCTION BY SUCROSE; GLUCOSE AND FRUCTOSE</scope>
</reference>
<reference key="6">
    <citation type="journal article" date="2007" name="Plant Cell Rep.">
        <title>Identification of a 20-bp regulatory element of the Arabidopsis pyrophosphate:fructose-6-phosphate 1-phosphotransferase alpha2 gene that is essential for expression.</title>
        <authorList>
            <person name="Lim H.-M."/>
            <person name="Cho J.-I."/>
            <person name="Lee S."/>
            <person name="Cho M.-H."/>
            <person name="Bhoo S.H."/>
            <person name="An G."/>
            <person name="Hahn T.-R."/>
            <person name="Jeon J.-S."/>
        </authorList>
    </citation>
    <scope>TISSUE SPECIFICITY</scope>
    <source>
        <strain>cv. Columbia</strain>
    </source>
</reference>
<reference key="7">
    <citation type="journal article" date="2009" name="Mol. Cells">
        <title>Altered expression of pyrophosphate: fructose-6-phosphate 1-phosphotransferase affects the growth of transgenic Arabidopsis plants.</title>
        <authorList>
            <person name="Lim H."/>
            <person name="Cho M.-H."/>
            <person name="Jeon J.-S."/>
            <person name="Bhoo S.H."/>
            <person name="Kwon Y.-K."/>
            <person name="Hahn T.-R."/>
        </authorList>
    </citation>
    <scope>FUNCTION</scope>
    <scope>DISRUPTION PHENOTYPE</scope>
    <scope>GENE FAMILY</scope>
    <scope>NOMENCLATURE</scope>
    <source>
        <strain>cv. Columbia</strain>
    </source>
</reference>
<proteinExistence type="evidence at protein level"/>
<protein>
    <recommendedName>
        <fullName evidence="1">Pyrophosphate--fructose 6-phosphate 1-phosphotransferase subunit alpha 1</fullName>
        <shortName evidence="1">PFP 1</shortName>
    </recommendedName>
    <alternativeName>
        <fullName evidence="1">6-phosphofructokinase, pyrophosphate dependent 1</fullName>
    </alternativeName>
    <alternativeName>
        <fullName evidence="1">PPi-PFK 1</fullName>
    </alternativeName>
    <alternativeName>
        <fullName evidence="1">Pyrophosphate-dependent 6-phosphofructose-1-kinase 1</fullName>
    </alternativeName>
</protein>
<comment type="function">
    <text evidence="1 4">Regulatory subunit of pyrophosphate--fructose 6-phosphate 1-phosphotransferase.</text>
</comment>
<comment type="activity regulation">
    <text evidence="1">Allosterically activated by fructose 2,6-bisphosphate.</text>
</comment>
<comment type="pathway">
    <text evidence="1">Carbohydrate degradation; glycolysis; D-glyceraldehyde 3-phosphate and glycerone phosphate from D-glucose: step 3/4.</text>
</comment>
<comment type="subunit">
    <text evidence="1">Tetramer of two alpha (regulatory) and two beta (catalytic) chains.</text>
</comment>
<comment type="interaction">
    <interactant intactId="EBI-1238145">
        <id>Q9SYP2</id>
    </interactant>
    <interactant intactId="EBI-963794">
        <id>Q940G6</id>
        <label>GID1C</label>
    </interactant>
    <organismsDiffer>false</organismsDiffer>
    <experiments>3</experiments>
</comment>
<comment type="subcellular location">
    <subcellularLocation>
        <location evidence="1">Cytoplasm</location>
    </subcellularLocation>
</comment>
<comment type="tissue specificity">
    <text evidence="3">Expressed in leaves, roots, and flowers (e.g. sepals, petals, stamen and gynoecium).</text>
</comment>
<comment type="induction">
    <text evidence="2">By sucrose, glucose, and fructose.</text>
</comment>
<comment type="disruption phenotype">
    <text evidence="4">Retarded growth and reduced pyrophosphate--fructose 6-phosphate 1-phosphotransferase (PFP) activity.</text>
</comment>
<comment type="similarity">
    <text evidence="1">Belongs to the phosphofructokinase type A (PFKA) family. PPi-dependent PFK group II subfamily. Clade 'Long' sub-subfamily.</text>
</comment>
<sequence>MDSDFGIPRELSPLQQLRSQYKPELPPCLQGTTVRVELGDGTTVAEAADSHTMARAFPHTLGQPLAHFLRETAQVPDAHIITELPSVRVGIVFCGRQAPGGHNVIWGLFEALKVHNAKSTLLGFLGGSEGLFAQKTLEITDDILQTYKNQGGYDLLGRTKDQIKTTEQVNAALKACTDLKLDGLVIIGGVISNTDAAHLAEFFAAAKCSTKVVGVPVTTNGDLKNQFVEANVGFDTICKVNSQLISNACTDALSAEKYYYFIRLMGRKHSHVALECTLQSHPNMVILGEEVAASKLTIFDIAKQICDAVQARAVEDKNHGVILIPEGLIVSIPEVYALLKEIHGLLRQGVSADKISTQLSPWSSALFEFLPPFIKKQLLLHPESDDSAQLSQIETEKLLAYLVETEMNKRLKEGTYKGKKFNAICHFFGYQARGSLPSKFDCDYAYVLGHICYHILAAGLNGYMATVTNLKSPVNKWKCGATPITAMMTVKHWSQDASYTLTSIGRPAIHPAMVDLKGKAYDLLRQNAQKFLMEDLYRNPGPLQYDGPGADAKAVSLCVEDQDYMGRIKKLQEYLDQVRTIVKPGCSQDVLKAALSVMASVTDVLTTISSNGGQ</sequence>
<name>PFPA1_ARATH</name>
<keyword id="KW-0021">Allosteric enzyme</keyword>
<keyword id="KW-0963">Cytoplasm</keyword>
<keyword id="KW-0324">Glycolysis</keyword>
<keyword id="KW-0418">Kinase</keyword>
<keyword id="KW-0460">Magnesium</keyword>
<keyword id="KW-0479">Metal-binding</keyword>
<keyword id="KW-1185">Reference proteome</keyword>
<keyword id="KW-0808">Transferase</keyword>
<accession>Q9SYP2</accession>
<evidence type="ECO:0000255" key="1">
    <source>
        <dbReference type="HAMAP-Rule" id="MF_03185"/>
    </source>
</evidence>
<evidence type="ECO:0000269" key="2">
    <source>
    </source>
</evidence>
<evidence type="ECO:0000269" key="3">
    <source>
    </source>
</evidence>
<evidence type="ECO:0000269" key="4">
    <source>
    </source>
</evidence>
<feature type="chain" id="PRO_0000420417" description="Pyrophosphate--fructose 6-phosphate 1-phosphotransferase subunit alpha 1">
    <location>
        <begin position="1"/>
        <end position="614"/>
    </location>
</feature>